<keyword id="KW-0687">Ribonucleoprotein</keyword>
<keyword id="KW-0689">Ribosomal protein</keyword>
<keyword id="KW-0694">RNA-binding</keyword>
<keyword id="KW-0699">rRNA-binding</keyword>
<protein>
    <recommendedName>
        <fullName evidence="1">Small ribosomal subunit protein uS17</fullName>
    </recommendedName>
    <alternativeName>
        <fullName evidence="2">30S ribosomal protein S17</fullName>
    </alternativeName>
</protein>
<name>RS17_VIBPA</name>
<comment type="function">
    <text evidence="1">One of the primary rRNA binding proteins, it binds specifically to the 5'-end of 16S ribosomal RNA.</text>
</comment>
<comment type="subunit">
    <text evidence="1">Part of the 30S ribosomal subunit.</text>
</comment>
<comment type="similarity">
    <text evidence="1">Belongs to the universal ribosomal protein uS17 family.</text>
</comment>
<accession>Q87T04</accession>
<organism>
    <name type="scientific">Vibrio parahaemolyticus serotype O3:K6 (strain RIMD 2210633)</name>
    <dbReference type="NCBI Taxonomy" id="223926"/>
    <lineage>
        <taxon>Bacteria</taxon>
        <taxon>Pseudomonadati</taxon>
        <taxon>Pseudomonadota</taxon>
        <taxon>Gammaproteobacteria</taxon>
        <taxon>Vibrionales</taxon>
        <taxon>Vibrionaceae</taxon>
        <taxon>Vibrio</taxon>
    </lineage>
</organism>
<proteinExistence type="inferred from homology"/>
<gene>
    <name evidence="1" type="primary">rpsQ</name>
    <name type="ordered locus">VP0266</name>
</gene>
<evidence type="ECO:0000255" key="1">
    <source>
        <dbReference type="HAMAP-Rule" id="MF_01345"/>
    </source>
</evidence>
<evidence type="ECO:0000305" key="2"/>
<dbReference type="EMBL" id="BA000031">
    <property type="protein sequence ID" value="BAC58529.1"/>
    <property type="molecule type" value="Genomic_DNA"/>
</dbReference>
<dbReference type="RefSeq" id="NP_796645.1">
    <property type="nucleotide sequence ID" value="NC_004603.1"/>
</dbReference>
<dbReference type="RefSeq" id="WP_005461671.1">
    <property type="nucleotide sequence ID" value="NC_004603.1"/>
</dbReference>
<dbReference type="SMR" id="Q87T04"/>
<dbReference type="GeneID" id="1187733"/>
<dbReference type="KEGG" id="vpa:VP0266"/>
<dbReference type="PATRIC" id="fig|223926.6.peg.257"/>
<dbReference type="eggNOG" id="COG0186">
    <property type="taxonomic scope" value="Bacteria"/>
</dbReference>
<dbReference type="HOGENOM" id="CLU_073626_1_1_6"/>
<dbReference type="Proteomes" id="UP000002493">
    <property type="component" value="Chromosome 1"/>
</dbReference>
<dbReference type="GO" id="GO:0022627">
    <property type="term" value="C:cytosolic small ribosomal subunit"/>
    <property type="evidence" value="ECO:0007669"/>
    <property type="project" value="TreeGrafter"/>
</dbReference>
<dbReference type="GO" id="GO:0019843">
    <property type="term" value="F:rRNA binding"/>
    <property type="evidence" value="ECO:0007669"/>
    <property type="project" value="UniProtKB-UniRule"/>
</dbReference>
<dbReference type="GO" id="GO:0003735">
    <property type="term" value="F:structural constituent of ribosome"/>
    <property type="evidence" value="ECO:0007669"/>
    <property type="project" value="InterPro"/>
</dbReference>
<dbReference type="GO" id="GO:0006412">
    <property type="term" value="P:translation"/>
    <property type="evidence" value="ECO:0007669"/>
    <property type="project" value="UniProtKB-UniRule"/>
</dbReference>
<dbReference type="CDD" id="cd00364">
    <property type="entry name" value="Ribosomal_uS17"/>
    <property type="match status" value="1"/>
</dbReference>
<dbReference type="FunFam" id="2.40.50.140:FF:000014">
    <property type="entry name" value="30S ribosomal protein S17"/>
    <property type="match status" value="1"/>
</dbReference>
<dbReference type="Gene3D" id="2.40.50.140">
    <property type="entry name" value="Nucleic acid-binding proteins"/>
    <property type="match status" value="1"/>
</dbReference>
<dbReference type="HAMAP" id="MF_01345_B">
    <property type="entry name" value="Ribosomal_uS17_B"/>
    <property type="match status" value="1"/>
</dbReference>
<dbReference type="InterPro" id="IPR012340">
    <property type="entry name" value="NA-bd_OB-fold"/>
</dbReference>
<dbReference type="InterPro" id="IPR000266">
    <property type="entry name" value="Ribosomal_uS17"/>
</dbReference>
<dbReference type="InterPro" id="IPR019984">
    <property type="entry name" value="Ribosomal_uS17_bact/chlr"/>
</dbReference>
<dbReference type="InterPro" id="IPR019979">
    <property type="entry name" value="Ribosomal_uS17_CS"/>
</dbReference>
<dbReference type="NCBIfam" id="NF004123">
    <property type="entry name" value="PRK05610.1"/>
    <property type="match status" value="1"/>
</dbReference>
<dbReference type="NCBIfam" id="TIGR03635">
    <property type="entry name" value="uS17_bact"/>
    <property type="match status" value="1"/>
</dbReference>
<dbReference type="PANTHER" id="PTHR10744">
    <property type="entry name" value="40S RIBOSOMAL PROTEIN S11 FAMILY MEMBER"/>
    <property type="match status" value="1"/>
</dbReference>
<dbReference type="PANTHER" id="PTHR10744:SF1">
    <property type="entry name" value="SMALL RIBOSOMAL SUBUNIT PROTEIN US17M"/>
    <property type="match status" value="1"/>
</dbReference>
<dbReference type="Pfam" id="PF00366">
    <property type="entry name" value="Ribosomal_S17"/>
    <property type="match status" value="1"/>
</dbReference>
<dbReference type="PRINTS" id="PR00973">
    <property type="entry name" value="RIBOSOMALS17"/>
</dbReference>
<dbReference type="SUPFAM" id="SSF50249">
    <property type="entry name" value="Nucleic acid-binding proteins"/>
    <property type="match status" value="1"/>
</dbReference>
<dbReference type="PROSITE" id="PS00056">
    <property type="entry name" value="RIBOSOMAL_S17"/>
    <property type="match status" value="1"/>
</dbReference>
<sequence>MSEVKRTQQGRVVSDKMDKSITVAIERFVKHPIYGKFVKRTTKVHAHDENNECGIGDTVEIAECRPLSKTKSWTLVKVVEKAKM</sequence>
<feature type="chain" id="PRO_0000233605" description="Small ribosomal subunit protein uS17">
    <location>
        <begin position="1"/>
        <end position="84"/>
    </location>
</feature>
<reference key="1">
    <citation type="journal article" date="2003" name="Lancet">
        <title>Genome sequence of Vibrio parahaemolyticus: a pathogenic mechanism distinct from that of V. cholerae.</title>
        <authorList>
            <person name="Makino K."/>
            <person name="Oshima K."/>
            <person name="Kurokawa K."/>
            <person name="Yokoyama K."/>
            <person name="Uda T."/>
            <person name="Tagomori K."/>
            <person name="Iijima Y."/>
            <person name="Najima M."/>
            <person name="Nakano M."/>
            <person name="Yamashita A."/>
            <person name="Kubota Y."/>
            <person name="Kimura S."/>
            <person name="Yasunaga T."/>
            <person name="Honda T."/>
            <person name="Shinagawa H."/>
            <person name="Hattori M."/>
            <person name="Iida T."/>
        </authorList>
    </citation>
    <scope>NUCLEOTIDE SEQUENCE [LARGE SCALE GENOMIC DNA]</scope>
    <source>
        <strain>RIMD 2210633</strain>
    </source>
</reference>